<dbReference type="EC" id="1.1.1.38" evidence="1"/>
<dbReference type="EMBL" id="CU928163">
    <property type="protein sequence ID" value="CAR12936.1"/>
    <property type="molecule type" value="Genomic_DNA"/>
</dbReference>
<dbReference type="RefSeq" id="WP_000433464.1">
    <property type="nucleotide sequence ID" value="NC_011751.1"/>
</dbReference>
<dbReference type="RefSeq" id="YP_002412470.1">
    <property type="nucleotide sequence ID" value="NC_011751.1"/>
</dbReference>
<dbReference type="SMR" id="B7N4P2"/>
<dbReference type="STRING" id="585056.ECUMN_1734"/>
<dbReference type="GeneID" id="93775638"/>
<dbReference type="KEGG" id="eum:ECUMN_1734"/>
<dbReference type="PATRIC" id="fig|585056.7.peg.1921"/>
<dbReference type="HOGENOM" id="CLU_011405_5_2_6"/>
<dbReference type="Proteomes" id="UP000007097">
    <property type="component" value="Chromosome"/>
</dbReference>
<dbReference type="GO" id="GO:0005829">
    <property type="term" value="C:cytosol"/>
    <property type="evidence" value="ECO:0007669"/>
    <property type="project" value="TreeGrafter"/>
</dbReference>
<dbReference type="GO" id="GO:0004471">
    <property type="term" value="F:malate dehydrogenase (decarboxylating) (NAD+) activity"/>
    <property type="evidence" value="ECO:0007669"/>
    <property type="project" value="UniProtKB-UniRule"/>
</dbReference>
<dbReference type="GO" id="GO:0046872">
    <property type="term" value="F:metal ion binding"/>
    <property type="evidence" value="ECO:0007669"/>
    <property type="project" value="UniProtKB-KW"/>
</dbReference>
<dbReference type="GO" id="GO:0051287">
    <property type="term" value="F:NAD binding"/>
    <property type="evidence" value="ECO:0007669"/>
    <property type="project" value="InterPro"/>
</dbReference>
<dbReference type="GO" id="GO:0008948">
    <property type="term" value="F:oxaloacetate decarboxylase activity"/>
    <property type="evidence" value="ECO:0007669"/>
    <property type="project" value="UniProtKB-UniRule"/>
</dbReference>
<dbReference type="GO" id="GO:0006108">
    <property type="term" value="P:malate metabolic process"/>
    <property type="evidence" value="ECO:0007669"/>
    <property type="project" value="TreeGrafter"/>
</dbReference>
<dbReference type="CDD" id="cd05312">
    <property type="entry name" value="NAD_bind_1_malic_enz"/>
    <property type="match status" value="1"/>
</dbReference>
<dbReference type="FunFam" id="3.40.50.10380:FF:000001">
    <property type="entry name" value="NAD-dependent malic enzyme"/>
    <property type="match status" value="1"/>
</dbReference>
<dbReference type="FunFam" id="3.40.50.720:FF:000055">
    <property type="entry name" value="NAD-dependent malic enzyme"/>
    <property type="match status" value="1"/>
</dbReference>
<dbReference type="Gene3D" id="3.40.50.10380">
    <property type="entry name" value="Malic enzyme, N-terminal domain"/>
    <property type="match status" value="1"/>
</dbReference>
<dbReference type="Gene3D" id="3.40.50.720">
    <property type="entry name" value="NAD(P)-binding Rossmann-like Domain"/>
    <property type="match status" value="1"/>
</dbReference>
<dbReference type="HAMAP" id="MF_01619">
    <property type="entry name" value="NAD_malic_enz"/>
    <property type="match status" value="1"/>
</dbReference>
<dbReference type="InterPro" id="IPR046346">
    <property type="entry name" value="Aminoacid_DH-like_N_sf"/>
</dbReference>
<dbReference type="InterPro" id="IPR015884">
    <property type="entry name" value="Malic_enzyme_CS"/>
</dbReference>
<dbReference type="InterPro" id="IPR012301">
    <property type="entry name" value="Malic_N_dom"/>
</dbReference>
<dbReference type="InterPro" id="IPR037062">
    <property type="entry name" value="Malic_N_dom_sf"/>
</dbReference>
<dbReference type="InterPro" id="IPR012302">
    <property type="entry name" value="Malic_NAD-bd"/>
</dbReference>
<dbReference type="InterPro" id="IPR001891">
    <property type="entry name" value="Malic_OxRdtase"/>
</dbReference>
<dbReference type="InterPro" id="IPR036291">
    <property type="entry name" value="NAD(P)-bd_dom_sf"/>
</dbReference>
<dbReference type="InterPro" id="IPR023667">
    <property type="entry name" value="NAD_malic_enz_proteobac"/>
</dbReference>
<dbReference type="NCBIfam" id="NF010052">
    <property type="entry name" value="PRK13529.1"/>
    <property type="match status" value="1"/>
</dbReference>
<dbReference type="PANTHER" id="PTHR23406">
    <property type="entry name" value="MALIC ENZYME-RELATED"/>
    <property type="match status" value="1"/>
</dbReference>
<dbReference type="PANTHER" id="PTHR23406:SF34">
    <property type="entry name" value="NAD-DEPENDENT MALIC ENZYME, MITOCHONDRIAL"/>
    <property type="match status" value="1"/>
</dbReference>
<dbReference type="Pfam" id="PF00390">
    <property type="entry name" value="malic"/>
    <property type="match status" value="1"/>
</dbReference>
<dbReference type="Pfam" id="PF03949">
    <property type="entry name" value="Malic_M"/>
    <property type="match status" value="1"/>
</dbReference>
<dbReference type="PIRSF" id="PIRSF000106">
    <property type="entry name" value="ME"/>
    <property type="match status" value="1"/>
</dbReference>
<dbReference type="PRINTS" id="PR00072">
    <property type="entry name" value="MALOXRDTASE"/>
</dbReference>
<dbReference type="SMART" id="SM01274">
    <property type="entry name" value="malic"/>
    <property type="match status" value="1"/>
</dbReference>
<dbReference type="SMART" id="SM00919">
    <property type="entry name" value="Malic_M"/>
    <property type="match status" value="1"/>
</dbReference>
<dbReference type="SUPFAM" id="SSF53223">
    <property type="entry name" value="Aminoacid dehydrogenase-like, N-terminal domain"/>
    <property type="match status" value="1"/>
</dbReference>
<dbReference type="SUPFAM" id="SSF51735">
    <property type="entry name" value="NAD(P)-binding Rossmann-fold domains"/>
    <property type="match status" value="1"/>
</dbReference>
<dbReference type="PROSITE" id="PS00331">
    <property type="entry name" value="MALIC_ENZYMES"/>
    <property type="match status" value="1"/>
</dbReference>
<accession>B7N4P2</accession>
<comment type="catalytic activity">
    <reaction evidence="1">
        <text>(S)-malate + NAD(+) = pyruvate + CO2 + NADH</text>
        <dbReference type="Rhea" id="RHEA:12653"/>
        <dbReference type="ChEBI" id="CHEBI:15361"/>
        <dbReference type="ChEBI" id="CHEBI:15589"/>
        <dbReference type="ChEBI" id="CHEBI:16526"/>
        <dbReference type="ChEBI" id="CHEBI:57540"/>
        <dbReference type="ChEBI" id="CHEBI:57945"/>
        <dbReference type="EC" id="1.1.1.38"/>
    </reaction>
</comment>
<comment type="catalytic activity">
    <reaction evidence="1">
        <text>oxaloacetate + H(+) = pyruvate + CO2</text>
        <dbReference type="Rhea" id="RHEA:15641"/>
        <dbReference type="ChEBI" id="CHEBI:15361"/>
        <dbReference type="ChEBI" id="CHEBI:15378"/>
        <dbReference type="ChEBI" id="CHEBI:16452"/>
        <dbReference type="ChEBI" id="CHEBI:16526"/>
        <dbReference type="EC" id="1.1.1.38"/>
    </reaction>
</comment>
<comment type="cofactor">
    <cofactor evidence="1">
        <name>Mg(2+)</name>
        <dbReference type="ChEBI" id="CHEBI:18420"/>
    </cofactor>
    <cofactor evidence="1">
        <name>Mn(2+)</name>
        <dbReference type="ChEBI" id="CHEBI:29035"/>
    </cofactor>
    <text evidence="1">Divalent metal cations. Prefers magnesium or manganese.</text>
</comment>
<comment type="subunit">
    <text evidence="1">Homotetramer.</text>
</comment>
<comment type="similarity">
    <text evidence="1">Belongs to the malic enzymes family.</text>
</comment>
<name>MAO1_ECOLU</name>
<evidence type="ECO:0000255" key="1">
    <source>
        <dbReference type="HAMAP-Rule" id="MF_01619"/>
    </source>
</evidence>
<feature type="chain" id="PRO_1000185996" description="NAD-dependent malic enzyme">
    <location>
        <begin position="1"/>
        <end position="565"/>
    </location>
</feature>
<feature type="active site" description="Proton donor" evidence="1">
    <location>
        <position position="104"/>
    </location>
</feature>
<feature type="active site" description="Proton acceptor" evidence="1">
    <location>
        <position position="175"/>
    </location>
</feature>
<feature type="binding site" evidence="1">
    <location>
        <position position="157"/>
    </location>
    <ligand>
        <name>NAD(+)</name>
        <dbReference type="ChEBI" id="CHEBI:57540"/>
    </ligand>
</feature>
<feature type="binding site" evidence="1">
    <location>
        <position position="246"/>
    </location>
    <ligand>
        <name>a divalent metal cation</name>
        <dbReference type="ChEBI" id="CHEBI:60240"/>
    </ligand>
</feature>
<feature type="binding site" evidence="1">
    <location>
        <position position="247"/>
    </location>
    <ligand>
        <name>a divalent metal cation</name>
        <dbReference type="ChEBI" id="CHEBI:60240"/>
    </ligand>
</feature>
<feature type="binding site" evidence="1">
    <location>
        <position position="270"/>
    </location>
    <ligand>
        <name>a divalent metal cation</name>
        <dbReference type="ChEBI" id="CHEBI:60240"/>
    </ligand>
</feature>
<feature type="binding site" evidence="1">
    <location>
        <position position="270"/>
    </location>
    <ligand>
        <name>NAD(+)</name>
        <dbReference type="ChEBI" id="CHEBI:57540"/>
    </ligand>
</feature>
<feature type="binding site" evidence="1">
    <location>
        <position position="418"/>
    </location>
    <ligand>
        <name>NAD(+)</name>
        <dbReference type="ChEBI" id="CHEBI:57540"/>
    </ligand>
</feature>
<feature type="site" description="Important for activity" evidence="1">
    <location>
        <position position="270"/>
    </location>
</feature>
<organism>
    <name type="scientific">Escherichia coli O17:K52:H18 (strain UMN026 / ExPEC)</name>
    <dbReference type="NCBI Taxonomy" id="585056"/>
    <lineage>
        <taxon>Bacteria</taxon>
        <taxon>Pseudomonadati</taxon>
        <taxon>Pseudomonadota</taxon>
        <taxon>Gammaproteobacteria</taxon>
        <taxon>Enterobacterales</taxon>
        <taxon>Enterobacteriaceae</taxon>
        <taxon>Escherichia</taxon>
    </lineage>
</organism>
<proteinExistence type="inferred from homology"/>
<sequence>MEPKTKKQRSLYIPYAGPVLLEFPLLNKGSAFSMEERRNFNLLGLLPEVVETIEEQAERAWIQYQGFKTEIDKHIYLRNIQDTNETLFYRLVNNHLDEMMPVIYTPTVGAACERFSEIYRRSRGVFISYQNRHNMDDILQNVPNHNIKVIVVTDGERILGLGDQGIGGMGIPIGKLSLYTACGGISPAYTLPVVLDVGTNNQQLLNDPLYMGWRNPRITDDEYYEFVDEFIQAVKQRWPDVLLQFEDFAQKNAMPLLNRYRNEICSFNDDIQGTAAVTVGTLIAASRAAGGQLSEKKIVFLGAGSAGCGIAEMIIAQTQREGLSEEAARQKVFMVDRFGLLTDKMPNLLPFQTKLVQKRENLSDWDTDSDVLSLLDVVRNVKPDILIGVSGQTGLFTEEIIREMHKHCPRPIVMPLSNPTSRVEATPQDIIAWTEGNALVATGSPFNPVVWKDKIYPIAQCNNAFIFPGIGLGVIASGASRITDEMLMSASETLAQYSPLVLNGEGLVLPELKDIQKVSRAIAFAVGKMAQQQGVAVKTSAEALQQAIDDNFWQAEYRDYRRTSI</sequence>
<keyword id="KW-0479">Metal-binding</keyword>
<keyword id="KW-0520">NAD</keyword>
<keyword id="KW-0560">Oxidoreductase</keyword>
<gene>
    <name evidence="1" type="primary">maeA</name>
    <name type="ordered locus">ECUMN_1734</name>
</gene>
<protein>
    <recommendedName>
        <fullName evidence="1">NAD-dependent malic enzyme</fullName>
        <shortName evidence="1">NAD-ME</shortName>
        <ecNumber evidence="1">1.1.1.38</ecNumber>
    </recommendedName>
</protein>
<reference key="1">
    <citation type="journal article" date="2009" name="PLoS Genet.">
        <title>Organised genome dynamics in the Escherichia coli species results in highly diverse adaptive paths.</title>
        <authorList>
            <person name="Touchon M."/>
            <person name="Hoede C."/>
            <person name="Tenaillon O."/>
            <person name="Barbe V."/>
            <person name="Baeriswyl S."/>
            <person name="Bidet P."/>
            <person name="Bingen E."/>
            <person name="Bonacorsi S."/>
            <person name="Bouchier C."/>
            <person name="Bouvet O."/>
            <person name="Calteau A."/>
            <person name="Chiapello H."/>
            <person name="Clermont O."/>
            <person name="Cruveiller S."/>
            <person name="Danchin A."/>
            <person name="Diard M."/>
            <person name="Dossat C."/>
            <person name="Karoui M.E."/>
            <person name="Frapy E."/>
            <person name="Garry L."/>
            <person name="Ghigo J.M."/>
            <person name="Gilles A.M."/>
            <person name="Johnson J."/>
            <person name="Le Bouguenec C."/>
            <person name="Lescat M."/>
            <person name="Mangenot S."/>
            <person name="Martinez-Jehanne V."/>
            <person name="Matic I."/>
            <person name="Nassif X."/>
            <person name="Oztas S."/>
            <person name="Petit M.A."/>
            <person name="Pichon C."/>
            <person name="Rouy Z."/>
            <person name="Ruf C.S."/>
            <person name="Schneider D."/>
            <person name="Tourret J."/>
            <person name="Vacherie B."/>
            <person name="Vallenet D."/>
            <person name="Medigue C."/>
            <person name="Rocha E.P.C."/>
            <person name="Denamur E."/>
        </authorList>
    </citation>
    <scope>NUCLEOTIDE SEQUENCE [LARGE SCALE GENOMIC DNA]</scope>
    <source>
        <strain>UMN026 / ExPEC</strain>
    </source>
</reference>